<evidence type="ECO:0000255" key="1">
    <source>
        <dbReference type="HAMAP-Rule" id="MF_00605"/>
    </source>
</evidence>
<accession>Q30TE6</accession>
<sequence length="231" mass="26047">MKFTFVTLFQNIVEGYFNDSILKRAIQKEILEVEYLNPRDFSDSRHNKVDDSAVGGGAGMVMNPQPLFDALDELKRVDSEVHILFLTPVAKSFKQNDAKRLSKKPHIAFVSGRYEGIDERVIEKYADEVFSIGDYILTGGELPSLVICDAISRNVDGVLGNSDSLSVESFETELLEAPSFSKPEIYKNISVPSEYLKGNHSKIRSLKLALSTCKTKFFRPEQLLKHKTQLH</sequence>
<comment type="function">
    <text evidence="1">Specifically methylates guanosine-37 in various tRNAs.</text>
</comment>
<comment type="catalytic activity">
    <reaction evidence="1">
        <text>guanosine(37) in tRNA + S-adenosyl-L-methionine = N(1)-methylguanosine(37) in tRNA + S-adenosyl-L-homocysteine + H(+)</text>
        <dbReference type="Rhea" id="RHEA:36899"/>
        <dbReference type="Rhea" id="RHEA-COMP:10145"/>
        <dbReference type="Rhea" id="RHEA-COMP:10147"/>
        <dbReference type="ChEBI" id="CHEBI:15378"/>
        <dbReference type="ChEBI" id="CHEBI:57856"/>
        <dbReference type="ChEBI" id="CHEBI:59789"/>
        <dbReference type="ChEBI" id="CHEBI:73542"/>
        <dbReference type="ChEBI" id="CHEBI:74269"/>
        <dbReference type="EC" id="2.1.1.228"/>
    </reaction>
</comment>
<comment type="subunit">
    <text evidence="1">Homodimer.</text>
</comment>
<comment type="subcellular location">
    <subcellularLocation>
        <location evidence="1">Cytoplasm</location>
    </subcellularLocation>
</comment>
<comment type="similarity">
    <text evidence="1">Belongs to the RNA methyltransferase TrmD family.</text>
</comment>
<keyword id="KW-0963">Cytoplasm</keyword>
<keyword id="KW-0489">Methyltransferase</keyword>
<keyword id="KW-1185">Reference proteome</keyword>
<keyword id="KW-0949">S-adenosyl-L-methionine</keyword>
<keyword id="KW-0808">Transferase</keyword>
<keyword id="KW-0819">tRNA processing</keyword>
<feature type="chain" id="PRO_0000257489" description="tRNA (guanine-N(1)-)-methyltransferase">
    <location>
        <begin position="1"/>
        <end position="231"/>
    </location>
</feature>
<feature type="binding site" evidence="1">
    <location>
        <position position="112"/>
    </location>
    <ligand>
        <name>S-adenosyl-L-methionine</name>
        <dbReference type="ChEBI" id="CHEBI:59789"/>
    </ligand>
</feature>
<feature type="binding site" evidence="1">
    <location>
        <begin position="132"/>
        <end position="137"/>
    </location>
    <ligand>
        <name>S-adenosyl-L-methionine</name>
        <dbReference type="ChEBI" id="CHEBI:59789"/>
    </ligand>
</feature>
<reference key="1">
    <citation type="journal article" date="2008" name="Appl. Environ. Microbiol.">
        <title>Genome of the epsilonproteobacterial chemolithoautotroph Sulfurimonas denitrificans.</title>
        <authorList>
            <person name="Sievert S.M."/>
            <person name="Scott K.M."/>
            <person name="Klotz M.G."/>
            <person name="Chain P.S.G."/>
            <person name="Hauser L.J."/>
            <person name="Hemp J."/>
            <person name="Huegler M."/>
            <person name="Land M."/>
            <person name="Lapidus A."/>
            <person name="Larimer F.W."/>
            <person name="Lucas S."/>
            <person name="Malfatti S.A."/>
            <person name="Meyer F."/>
            <person name="Paulsen I.T."/>
            <person name="Ren Q."/>
            <person name="Simon J."/>
            <person name="Bailey K."/>
            <person name="Diaz E."/>
            <person name="Fitzpatrick K.A."/>
            <person name="Glover B."/>
            <person name="Gwatney N."/>
            <person name="Korajkic A."/>
            <person name="Long A."/>
            <person name="Mobberley J.M."/>
            <person name="Pantry S.N."/>
            <person name="Pazder G."/>
            <person name="Peterson S."/>
            <person name="Quintanilla J.D."/>
            <person name="Sprinkle R."/>
            <person name="Stephens J."/>
            <person name="Thomas P."/>
            <person name="Vaughn R."/>
            <person name="Weber M.J."/>
            <person name="Wooten L.L."/>
        </authorList>
    </citation>
    <scope>NUCLEOTIDE SEQUENCE [LARGE SCALE GENOMIC DNA]</scope>
    <source>
        <strain>ATCC 33889 / DSM 1251</strain>
    </source>
</reference>
<protein>
    <recommendedName>
        <fullName evidence="1">tRNA (guanine-N(1)-)-methyltransferase</fullName>
        <ecNumber evidence="1">2.1.1.228</ecNumber>
    </recommendedName>
    <alternativeName>
        <fullName evidence="1">M1G-methyltransferase</fullName>
    </alternativeName>
    <alternativeName>
        <fullName evidence="1">tRNA [GM37] methyltransferase</fullName>
    </alternativeName>
</protein>
<proteinExistence type="inferred from homology"/>
<name>TRMD_SULDN</name>
<organism>
    <name type="scientific">Sulfurimonas denitrificans (strain ATCC 33889 / DSM 1251)</name>
    <name type="common">Thiomicrospira denitrificans (strain ATCC 33889 / DSM 1251)</name>
    <dbReference type="NCBI Taxonomy" id="326298"/>
    <lineage>
        <taxon>Bacteria</taxon>
        <taxon>Pseudomonadati</taxon>
        <taxon>Campylobacterota</taxon>
        <taxon>Epsilonproteobacteria</taxon>
        <taxon>Campylobacterales</taxon>
        <taxon>Sulfurimonadaceae</taxon>
        <taxon>Sulfurimonas</taxon>
    </lineage>
</organism>
<gene>
    <name evidence="1" type="primary">trmD</name>
    <name type="ordered locus">Suden_0454</name>
</gene>
<dbReference type="EC" id="2.1.1.228" evidence="1"/>
<dbReference type="EMBL" id="CP000153">
    <property type="protein sequence ID" value="ABB43735.1"/>
    <property type="molecule type" value="Genomic_DNA"/>
</dbReference>
<dbReference type="RefSeq" id="WP_011372089.1">
    <property type="nucleotide sequence ID" value="NC_007575.1"/>
</dbReference>
<dbReference type="SMR" id="Q30TE6"/>
<dbReference type="STRING" id="326298.Suden_0454"/>
<dbReference type="KEGG" id="tdn:Suden_0454"/>
<dbReference type="eggNOG" id="COG0336">
    <property type="taxonomic scope" value="Bacteria"/>
</dbReference>
<dbReference type="HOGENOM" id="CLU_047363_0_1_7"/>
<dbReference type="OrthoDB" id="9807416at2"/>
<dbReference type="Proteomes" id="UP000002714">
    <property type="component" value="Chromosome"/>
</dbReference>
<dbReference type="GO" id="GO:0005829">
    <property type="term" value="C:cytosol"/>
    <property type="evidence" value="ECO:0007669"/>
    <property type="project" value="TreeGrafter"/>
</dbReference>
<dbReference type="GO" id="GO:0052906">
    <property type="term" value="F:tRNA (guanine(37)-N1)-methyltransferase activity"/>
    <property type="evidence" value="ECO:0007669"/>
    <property type="project" value="UniProtKB-UniRule"/>
</dbReference>
<dbReference type="GO" id="GO:0002939">
    <property type="term" value="P:tRNA N1-guanine methylation"/>
    <property type="evidence" value="ECO:0007669"/>
    <property type="project" value="TreeGrafter"/>
</dbReference>
<dbReference type="CDD" id="cd18080">
    <property type="entry name" value="TrmD-like"/>
    <property type="match status" value="1"/>
</dbReference>
<dbReference type="Gene3D" id="3.40.1280.10">
    <property type="match status" value="1"/>
</dbReference>
<dbReference type="Gene3D" id="1.10.1270.20">
    <property type="entry name" value="tRNA(m1g37)methyltransferase, domain 2"/>
    <property type="match status" value="1"/>
</dbReference>
<dbReference type="HAMAP" id="MF_00605">
    <property type="entry name" value="TrmD"/>
    <property type="match status" value="1"/>
</dbReference>
<dbReference type="InterPro" id="IPR029028">
    <property type="entry name" value="Alpha/beta_knot_MTases"/>
</dbReference>
<dbReference type="InterPro" id="IPR023148">
    <property type="entry name" value="tRNA_m1G_MeTrfase_C_sf"/>
</dbReference>
<dbReference type="InterPro" id="IPR002649">
    <property type="entry name" value="tRNA_m1G_MeTrfase_TrmD"/>
</dbReference>
<dbReference type="InterPro" id="IPR029026">
    <property type="entry name" value="tRNA_m1G_MTases_N"/>
</dbReference>
<dbReference type="InterPro" id="IPR016009">
    <property type="entry name" value="tRNA_MeTrfase_TRMD/TRM10"/>
</dbReference>
<dbReference type="NCBIfam" id="NF000648">
    <property type="entry name" value="PRK00026.1"/>
    <property type="match status" value="1"/>
</dbReference>
<dbReference type="NCBIfam" id="TIGR00088">
    <property type="entry name" value="trmD"/>
    <property type="match status" value="1"/>
</dbReference>
<dbReference type="PANTHER" id="PTHR46417">
    <property type="entry name" value="TRNA (GUANINE-N(1)-)-METHYLTRANSFERASE"/>
    <property type="match status" value="1"/>
</dbReference>
<dbReference type="PANTHER" id="PTHR46417:SF1">
    <property type="entry name" value="TRNA (GUANINE-N(1)-)-METHYLTRANSFERASE"/>
    <property type="match status" value="1"/>
</dbReference>
<dbReference type="Pfam" id="PF01746">
    <property type="entry name" value="tRNA_m1G_MT"/>
    <property type="match status" value="1"/>
</dbReference>
<dbReference type="PIRSF" id="PIRSF000386">
    <property type="entry name" value="tRNA_mtase"/>
    <property type="match status" value="1"/>
</dbReference>
<dbReference type="SUPFAM" id="SSF75217">
    <property type="entry name" value="alpha/beta knot"/>
    <property type="match status" value="1"/>
</dbReference>